<organism>
    <name type="scientific">Arabidopsis thaliana</name>
    <name type="common">Mouse-ear cress</name>
    <dbReference type="NCBI Taxonomy" id="3702"/>
    <lineage>
        <taxon>Eukaryota</taxon>
        <taxon>Viridiplantae</taxon>
        <taxon>Streptophyta</taxon>
        <taxon>Embryophyta</taxon>
        <taxon>Tracheophyta</taxon>
        <taxon>Spermatophyta</taxon>
        <taxon>Magnoliopsida</taxon>
        <taxon>eudicotyledons</taxon>
        <taxon>Gunneridae</taxon>
        <taxon>Pentapetalae</taxon>
        <taxon>rosids</taxon>
        <taxon>malvids</taxon>
        <taxon>Brassicales</taxon>
        <taxon>Brassicaceae</taxon>
        <taxon>Camelineae</taxon>
        <taxon>Arabidopsis</taxon>
    </lineage>
</organism>
<reference key="1">
    <citation type="journal article" date="2005" name="Plant Physiol.">
        <title>Functional analysis of the RING-type ubiquitin ligase family of Arabidopsis.</title>
        <authorList>
            <person name="Stone S.L."/>
            <person name="Hauksdottir H."/>
            <person name="Troy A."/>
            <person name="Herschleb J."/>
            <person name="Kraft E."/>
            <person name="Callis J."/>
        </authorList>
    </citation>
    <scope>NUCLEOTIDE SEQUENCE [MRNA]</scope>
    <scope>FUNCTION</scope>
    <source>
        <strain>cv. Columbia</strain>
        <tissue>Seedling</tissue>
    </source>
</reference>
<reference key="2">
    <citation type="journal article" date="2000" name="Nature">
        <title>Sequence and analysis of chromosome 1 of the plant Arabidopsis thaliana.</title>
        <authorList>
            <person name="Theologis A."/>
            <person name="Ecker J.R."/>
            <person name="Palm C.J."/>
            <person name="Federspiel N.A."/>
            <person name="Kaul S."/>
            <person name="White O."/>
            <person name="Alonso J."/>
            <person name="Altafi H."/>
            <person name="Araujo R."/>
            <person name="Bowman C.L."/>
            <person name="Brooks S.Y."/>
            <person name="Buehler E."/>
            <person name="Chan A."/>
            <person name="Chao Q."/>
            <person name="Chen H."/>
            <person name="Cheuk R.F."/>
            <person name="Chin C.W."/>
            <person name="Chung M.K."/>
            <person name="Conn L."/>
            <person name="Conway A.B."/>
            <person name="Conway A.R."/>
            <person name="Creasy T.H."/>
            <person name="Dewar K."/>
            <person name="Dunn P."/>
            <person name="Etgu P."/>
            <person name="Feldblyum T.V."/>
            <person name="Feng J.-D."/>
            <person name="Fong B."/>
            <person name="Fujii C.Y."/>
            <person name="Gill J.E."/>
            <person name="Goldsmith A.D."/>
            <person name="Haas B."/>
            <person name="Hansen N.F."/>
            <person name="Hughes B."/>
            <person name="Huizar L."/>
            <person name="Hunter J.L."/>
            <person name="Jenkins J."/>
            <person name="Johnson-Hopson C."/>
            <person name="Khan S."/>
            <person name="Khaykin E."/>
            <person name="Kim C.J."/>
            <person name="Koo H.L."/>
            <person name="Kremenetskaia I."/>
            <person name="Kurtz D.B."/>
            <person name="Kwan A."/>
            <person name="Lam B."/>
            <person name="Langin-Hooper S."/>
            <person name="Lee A."/>
            <person name="Lee J.M."/>
            <person name="Lenz C.A."/>
            <person name="Li J.H."/>
            <person name="Li Y.-P."/>
            <person name="Lin X."/>
            <person name="Liu S.X."/>
            <person name="Liu Z.A."/>
            <person name="Luros J.S."/>
            <person name="Maiti R."/>
            <person name="Marziali A."/>
            <person name="Militscher J."/>
            <person name="Miranda M."/>
            <person name="Nguyen M."/>
            <person name="Nierman W.C."/>
            <person name="Osborne B.I."/>
            <person name="Pai G."/>
            <person name="Peterson J."/>
            <person name="Pham P.K."/>
            <person name="Rizzo M."/>
            <person name="Rooney T."/>
            <person name="Rowley D."/>
            <person name="Sakano H."/>
            <person name="Salzberg S.L."/>
            <person name="Schwartz J.R."/>
            <person name="Shinn P."/>
            <person name="Southwick A.M."/>
            <person name="Sun H."/>
            <person name="Tallon L.J."/>
            <person name="Tambunga G."/>
            <person name="Toriumi M.J."/>
            <person name="Town C.D."/>
            <person name="Utterback T."/>
            <person name="Van Aken S."/>
            <person name="Vaysberg M."/>
            <person name="Vysotskaia V.S."/>
            <person name="Walker M."/>
            <person name="Wu D."/>
            <person name="Yu G."/>
            <person name="Fraser C.M."/>
            <person name="Venter J.C."/>
            <person name="Davis R.W."/>
        </authorList>
    </citation>
    <scope>NUCLEOTIDE SEQUENCE [LARGE SCALE GENOMIC DNA]</scope>
    <source>
        <strain>cv. Columbia</strain>
    </source>
</reference>
<reference key="3">
    <citation type="journal article" date="2017" name="Plant J.">
        <title>Araport11: a complete reannotation of the Arabidopsis thaliana reference genome.</title>
        <authorList>
            <person name="Cheng C.Y."/>
            <person name="Krishnakumar V."/>
            <person name="Chan A.P."/>
            <person name="Thibaud-Nissen F."/>
            <person name="Schobel S."/>
            <person name="Town C.D."/>
        </authorList>
    </citation>
    <scope>GENOME REANNOTATION</scope>
    <source>
        <strain>cv. Columbia</strain>
    </source>
</reference>
<reference key="4">
    <citation type="journal article" date="2003" name="Science">
        <title>Empirical analysis of transcriptional activity in the Arabidopsis genome.</title>
        <authorList>
            <person name="Yamada K."/>
            <person name="Lim J."/>
            <person name="Dale J.M."/>
            <person name="Chen H."/>
            <person name="Shinn P."/>
            <person name="Palm C.J."/>
            <person name="Southwick A.M."/>
            <person name="Wu H.C."/>
            <person name="Kim C.J."/>
            <person name="Nguyen M."/>
            <person name="Pham P.K."/>
            <person name="Cheuk R.F."/>
            <person name="Karlin-Newmann G."/>
            <person name="Liu S.X."/>
            <person name="Lam B."/>
            <person name="Sakano H."/>
            <person name="Wu T."/>
            <person name="Yu G."/>
            <person name="Miranda M."/>
            <person name="Quach H.L."/>
            <person name="Tripp M."/>
            <person name="Chang C.H."/>
            <person name="Lee J.M."/>
            <person name="Toriumi M.J."/>
            <person name="Chan M.M."/>
            <person name="Tang C.C."/>
            <person name="Onodera C.S."/>
            <person name="Deng J.M."/>
            <person name="Akiyama K."/>
            <person name="Ansari Y."/>
            <person name="Arakawa T."/>
            <person name="Banh J."/>
            <person name="Banno F."/>
            <person name="Bowser L."/>
            <person name="Brooks S.Y."/>
            <person name="Carninci P."/>
            <person name="Chao Q."/>
            <person name="Choy N."/>
            <person name="Enju A."/>
            <person name="Goldsmith A.D."/>
            <person name="Gurjal M."/>
            <person name="Hansen N.F."/>
            <person name="Hayashizaki Y."/>
            <person name="Johnson-Hopson C."/>
            <person name="Hsuan V.W."/>
            <person name="Iida K."/>
            <person name="Karnes M."/>
            <person name="Khan S."/>
            <person name="Koesema E."/>
            <person name="Ishida J."/>
            <person name="Jiang P.X."/>
            <person name="Jones T."/>
            <person name="Kawai J."/>
            <person name="Kamiya A."/>
            <person name="Meyers C."/>
            <person name="Nakajima M."/>
            <person name="Narusaka M."/>
            <person name="Seki M."/>
            <person name="Sakurai T."/>
            <person name="Satou M."/>
            <person name="Tamse R."/>
            <person name="Vaysberg M."/>
            <person name="Wallender E.K."/>
            <person name="Wong C."/>
            <person name="Yamamura Y."/>
            <person name="Yuan S."/>
            <person name="Shinozaki K."/>
            <person name="Davis R.W."/>
            <person name="Theologis A."/>
            <person name="Ecker J.R."/>
        </authorList>
    </citation>
    <scope>NUCLEOTIDE SEQUENCE [LARGE SCALE MRNA]</scope>
    <source>
        <strain>cv. Columbia</strain>
    </source>
</reference>
<reference key="5">
    <citation type="journal article" date="2009" name="Plant Physiol.">
        <title>Large-scale Arabidopsis phosphoproteome profiling reveals novel chloroplast kinase substrates and phosphorylation networks.</title>
        <authorList>
            <person name="Reiland S."/>
            <person name="Messerli G."/>
            <person name="Baerenfaller K."/>
            <person name="Gerrits B."/>
            <person name="Endler A."/>
            <person name="Grossmann J."/>
            <person name="Gruissem W."/>
            <person name="Baginsky S."/>
        </authorList>
    </citation>
    <scope>IDENTIFICATION BY MASS SPECTROMETRY [LARGE SCALE ANALYSIS]</scope>
</reference>
<dbReference type="EC" id="2.3.2.27"/>
<dbReference type="EMBL" id="DQ059089">
    <property type="protein sequence ID" value="AAY63561.1"/>
    <property type="molecule type" value="mRNA"/>
</dbReference>
<dbReference type="EMBL" id="AC025417">
    <property type="protein sequence ID" value="AAF88088.1"/>
    <property type="molecule type" value="Genomic_DNA"/>
</dbReference>
<dbReference type="EMBL" id="CP002684">
    <property type="protein sequence ID" value="AEE28924.1"/>
    <property type="molecule type" value="Genomic_DNA"/>
</dbReference>
<dbReference type="EMBL" id="AY136370">
    <property type="protein sequence ID" value="AAM97036.1"/>
    <property type="molecule type" value="mRNA"/>
</dbReference>
<dbReference type="EMBL" id="BT000279">
    <property type="protein sequence ID" value="AAN15598.1"/>
    <property type="molecule type" value="mRNA"/>
</dbReference>
<dbReference type="RefSeq" id="NP_172736.2">
    <molecule id="Q9LN71-1"/>
    <property type="nucleotide sequence ID" value="NM_101146.3"/>
</dbReference>
<dbReference type="SMR" id="Q9LN71"/>
<dbReference type="FunCoup" id="Q9LN71">
    <property type="interactions" value="479"/>
</dbReference>
<dbReference type="STRING" id="3702.Q9LN71"/>
<dbReference type="iPTMnet" id="Q9LN71"/>
<dbReference type="PaxDb" id="3702-AT1G12760.1"/>
<dbReference type="ProteomicsDB" id="236264">
    <molecule id="Q9LN71-1"/>
</dbReference>
<dbReference type="EnsemblPlants" id="AT1G12760.1">
    <molecule id="Q9LN71-1"/>
    <property type="protein sequence ID" value="AT1G12760.1"/>
    <property type="gene ID" value="AT1G12760"/>
</dbReference>
<dbReference type="GeneID" id="837832"/>
<dbReference type="Gramene" id="AT1G12760.1">
    <molecule id="Q9LN71-1"/>
    <property type="protein sequence ID" value="AT1G12760.1"/>
    <property type="gene ID" value="AT1G12760"/>
</dbReference>
<dbReference type="KEGG" id="ath:AT1G12760"/>
<dbReference type="Araport" id="AT1G12760"/>
<dbReference type="TAIR" id="AT1G12760"/>
<dbReference type="eggNOG" id="KOG0800">
    <property type="taxonomic scope" value="Eukaryota"/>
</dbReference>
<dbReference type="InParanoid" id="Q9LN71"/>
<dbReference type="PhylomeDB" id="Q9LN71"/>
<dbReference type="UniPathway" id="UPA00143"/>
<dbReference type="PRO" id="PR:Q9LN71"/>
<dbReference type="Proteomes" id="UP000006548">
    <property type="component" value="Chromosome 1"/>
</dbReference>
<dbReference type="ExpressionAtlas" id="Q9LN71">
    <property type="expression patterns" value="baseline and differential"/>
</dbReference>
<dbReference type="GO" id="GO:0016020">
    <property type="term" value="C:membrane"/>
    <property type="evidence" value="ECO:0007669"/>
    <property type="project" value="UniProtKB-SubCell"/>
</dbReference>
<dbReference type="GO" id="GO:0004842">
    <property type="term" value="F:ubiquitin-protein transferase activity"/>
    <property type="evidence" value="ECO:0000314"/>
    <property type="project" value="TAIR"/>
</dbReference>
<dbReference type="GO" id="GO:0008270">
    <property type="term" value="F:zinc ion binding"/>
    <property type="evidence" value="ECO:0007669"/>
    <property type="project" value="UniProtKB-KW"/>
</dbReference>
<dbReference type="GO" id="GO:0016567">
    <property type="term" value="P:protein ubiquitination"/>
    <property type="evidence" value="ECO:0007669"/>
    <property type="project" value="UniProtKB-UniPathway"/>
</dbReference>
<dbReference type="CDD" id="cd16467">
    <property type="entry name" value="RING-H2_RNF6-like"/>
    <property type="match status" value="1"/>
</dbReference>
<dbReference type="FunFam" id="3.30.40.10:FF:000217">
    <property type="entry name" value="E3 ubiquitin-protein ligase At1g12760"/>
    <property type="match status" value="1"/>
</dbReference>
<dbReference type="Gene3D" id="3.30.40.10">
    <property type="entry name" value="Zinc/RING finger domain, C3HC4 (zinc finger)"/>
    <property type="match status" value="1"/>
</dbReference>
<dbReference type="InterPro" id="IPR001841">
    <property type="entry name" value="Znf_RING"/>
</dbReference>
<dbReference type="InterPro" id="IPR013083">
    <property type="entry name" value="Znf_RING/FYVE/PHD"/>
</dbReference>
<dbReference type="PANTHER" id="PTHR45977:SF28">
    <property type="entry name" value="OS02G0674700 PROTEIN"/>
    <property type="match status" value="1"/>
</dbReference>
<dbReference type="PANTHER" id="PTHR45977">
    <property type="entry name" value="TARGET OF ERK KINASE MPK-1"/>
    <property type="match status" value="1"/>
</dbReference>
<dbReference type="Pfam" id="PF13639">
    <property type="entry name" value="zf-RING_2"/>
    <property type="match status" value="1"/>
</dbReference>
<dbReference type="SMART" id="SM00184">
    <property type="entry name" value="RING"/>
    <property type="match status" value="1"/>
</dbReference>
<dbReference type="SUPFAM" id="SSF57850">
    <property type="entry name" value="RING/U-box"/>
    <property type="match status" value="1"/>
</dbReference>
<dbReference type="PROSITE" id="PS50089">
    <property type="entry name" value="ZF_RING_2"/>
    <property type="match status" value="1"/>
</dbReference>
<gene>
    <name type="ordered locus">At1g12760</name>
    <name type="ORF">T12C24.29</name>
</gene>
<proteinExistence type="evidence at protein level"/>
<evidence type="ECO:0000250" key="1"/>
<evidence type="ECO:0000255" key="2"/>
<evidence type="ECO:0000255" key="3">
    <source>
        <dbReference type="PROSITE-ProRule" id="PRU00175"/>
    </source>
</evidence>
<evidence type="ECO:0000256" key="4">
    <source>
        <dbReference type="SAM" id="MobiDB-lite"/>
    </source>
</evidence>
<evidence type="ECO:0000269" key="5">
    <source>
    </source>
</evidence>
<evidence type="ECO:0000305" key="6"/>
<feature type="chain" id="PRO_0000271541" description="E3 ubiquitin-protein ligase At1g12760">
    <location>
        <begin position="1"/>
        <end position="408"/>
    </location>
</feature>
<feature type="transmembrane region" description="Helical" evidence="2">
    <location>
        <begin position="100"/>
        <end position="120"/>
    </location>
</feature>
<feature type="transmembrane region" description="Helical" evidence="2">
    <location>
        <begin position="133"/>
        <end position="153"/>
    </location>
</feature>
<feature type="transmembrane region" description="Helical" evidence="2">
    <location>
        <begin position="219"/>
        <end position="239"/>
    </location>
</feature>
<feature type="transmembrane region" description="Helical" evidence="2">
    <location>
        <begin position="254"/>
        <end position="274"/>
    </location>
</feature>
<feature type="transmembrane region" description="Helical" evidence="2">
    <location>
        <begin position="275"/>
        <end position="295"/>
    </location>
</feature>
<feature type="zinc finger region" description="RING-type; atypical" evidence="3">
    <location>
        <begin position="353"/>
        <end position="394"/>
    </location>
</feature>
<feature type="region of interest" description="Disordered" evidence="4">
    <location>
        <begin position="1"/>
        <end position="52"/>
    </location>
</feature>
<feature type="region of interest" description="Disordered" evidence="4">
    <location>
        <begin position="160"/>
        <end position="195"/>
    </location>
</feature>
<feature type="compositionally biased region" description="Low complexity" evidence="4">
    <location>
        <begin position="10"/>
        <end position="34"/>
    </location>
</feature>
<feature type="compositionally biased region" description="Low complexity" evidence="4">
    <location>
        <begin position="163"/>
        <end position="183"/>
    </location>
</feature>
<comment type="function">
    <text evidence="5">Mediates E2-dependent protein ubiquitination in vitro.</text>
</comment>
<comment type="catalytic activity">
    <reaction>
        <text>S-ubiquitinyl-[E2 ubiquitin-conjugating enzyme]-L-cysteine + [acceptor protein]-L-lysine = [E2 ubiquitin-conjugating enzyme]-L-cysteine + N(6)-ubiquitinyl-[acceptor protein]-L-lysine.</text>
        <dbReference type="EC" id="2.3.2.27"/>
    </reaction>
</comment>
<comment type="pathway">
    <text>Protein modification; protein ubiquitination.</text>
</comment>
<comment type="subcellular location">
    <subcellularLocation>
        <location evidence="6">Membrane</location>
        <topology evidence="6">Multi-pass membrane protein</topology>
    </subcellularLocation>
</comment>
<comment type="alternative products">
    <event type="alternative splicing"/>
    <isoform>
        <id>Q9LN71-1</id>
        <name>1</name>
        <sequence type="displayed"/>
    </isoform>
    <text>A number of isoforms are produced. According to EST sequences.</text>
</comment>
<comment type="domain">
    <text evidence="1">The RING-type zinc finger domain mediates binding to an E2 ubiquitin-conjugating enzyme.</text>
</comment>
<sequence length="408" mass="45086">MSTETTTGNSSLIPASSSSSSSDAIDPAPLLFNGDDNEGNNGGGGGERRSVRRQGLREAARFLSRASSGRVMREPSMLVREAAAEQLEERQSDWAYSKPVVVLDIVWNLAFVSVATAILVMSRKEHPIMPLRVWLLGYALQCVLHMVCVCVEYRRRNRRRTNRTTTTTPPRSRSSSSSSSSSSLEEEALGSRRNSGVQDLSLGHLDTESSSVAKHLESANTMFSFIWWIIGFYWVSAGGQELAQESPRIYWLSIVFLGFDVFFVVFCVALACVIGIAVCCCLPCIIAVLYAVADQEGASKEDIEQLTKFKFRKLGDANKHTNDEAQGTTEGIMTECGTDSPIEHTLLQEDAECCICLSAYEDGTELRELPCGHHFHCSCVDKWLYINATCPLCKYNILKSSNLDREEV</sequence>
<protein>
    <recommendedName>
        <fullName>E3 ubiquitin-protein ligase At1g12760</fullName>
        <ecNumber>2.3.2.27</ecNumber>
    </recommendedName>
    <alternativeName>
        <fullName>RING finger protein At1g12760</fullName>
    </alternativeName>
    <alternativeName>
        <fullName evidence="6">RING-type E3 ubiquitin transferase At1g12760</fullName>
    </alternativeName>
</protein>
<keyword id="KW-0025">Alternative splicing</keyword>
<keyword id="KW-0472">Membrane</keyword>
<keyword id="KW-0479">Metal-binding</keyword>
<keyword id="KW-1185">Reference proteome</keyword>
<keyword id="KW-0808">Transferase</keyword>
<keyword id="KW-0812">Transmembrane</keyword>
<keyword id="KW-1133">Transmembrane helix</keyword>
<keyword id="KW-0833">Ubl conjugation pathway</keyword>
<keyword id="KW-0862">Zinc</keyword>
<keyword id="KW-0863">Zinc-finger</keyword>
<name>RING1_ARATH</name>
<accession>Q9LN71</accession>
<accession>Q2V4N8</accession>